<organism>
    <name type="scientific">Arthroderma benhamiae (strain ATCC MYA-4681 / CBS 112371)</name>
    <name type="common">Trichophyton mentagrophytes</name>
    <dbReference type="NCBI Taxonomy" id="663331"/>
    <lineage>
        <taxon>Eukaryota</taxon>
        <taxon>Fungi</taxon>
        <taxon>Dikarya</taxon>
        <taxon>Ascomycota</taxon>
        <taxon>Pezizomycotina</taxon>
        <taxon>Eurotiomycetes</taxon>
        <taxon>Eurotiomycetidae</taxon>
        <taxon>Onygenales</taxon>
        <taxon>Arthrodermataceae</taxon>
        <taxon>Trichophyton</taxon>
    </lineage>
</organism>
<reference key="1">
    <citation type="journal article" date="2011" name="Genome Biol.">
        <title>Comparative and functional genomics provide insights into the pathogenicity of dermatophytic fungi.</title>
        <authorList>
            <person name="Burmester A."/>
            <person name="Shelest E."/>
            <person name="Gloeckner G."/>
            <person name="Heddergott C."/>
            <person name="Schindler S."/>
            <person name="Staib P."/>
            <person name="Heidel A."/>
            <person name="Felder M."/>
            <person name="Petzold A."/>
            <person name="Szafranski K."/>
            <person name="Feuermann M."/>
            <person name="Pedruzzi I."/>
            <person name="Priebe S."/>
            <person name="Groth M."/>
            <person name="Winkler R."/>
            <person name="Li W."/>
            <person name="Kniemeyer O."/>
            <person name="Schroeckh V."/>
            <person name="Hertweck C."/>
            <person name="Hube B."/>
            <person name="White T.C."/>
            <person name="Platzer M."/>
            <person name="Guthke R."/>
            <person name="Heitman J."/>
            <person name="Woestemeyer J."/>
            <person name="Zipfel P.F."/>
            <person name="Monod M."/>
            <person name="Brakhage A.A."/>
        </authorList>
    </citation>
    <scope>NUCLEOTIDE SEQUENCE [LARGE SCALE GENOMIC DNA]</scope>
    <source>
        <strain>ATCC MYA-4681 / CBS 112371</strain>
    </source>
</reference>
<reference key="2">
    <citation type="journal article" date="2011" name="Proteomics">
        <title>Identification of novel secreted proteases during extracellular proteolysis by dermatophytes at acidic pH.</title>
        <authorList>
            <person name="Sriranganadane D."/>
            <person name="Waridel P."/>
            <person name="Salamin K."/>
            <person name="Feuermann M."/>
            <person name="Mignon B."/>
            <person name="Staib P."/>
            <person name="Neuhaus J.M."/>
            <person name="Quadroni M."/>
            <person name="Monod M."/>
        </authorList>
    </citation>
    <scope>IDENTIFICATION BY MASS SPECTROMETRY</scope>
    <scope>SUBCELLULAR LOCATION</scope>
</reference>
<feature type="signal peptide" evidence="3">
    <location>
        <begin position="1"/>
        <end position="18"/>
    </location>
</feature>
<feature type="chain" id="PRO_0000434777" description="Probable GPI-anchored cupredoxin ARB_05732-1">
    <location>
        <begin position="19"/>
        <end position="153"/>
    </location>
</feature>
<feature type="propeptide" id="PRO_0000434778" description="Removed in mature form" evidence="3">
    <location>
        <begin position="154"/>
        <end position="186"/>
    </location>
</feature>
<feature type="region of interest" description="Disordered" evidence="5">
    <location>
        <begin position="130"/>
        <end position="160"/>
    </location>
</feature>
<feature type="compositionally biased region" description="Low complexity" evidence="5">
    <location>
        <begin position="143"/>
        <end position="160"/>
    </location>
</feature>
<feature type="binding site" evidence="2">
    <location>
        <position position="55"/>
    </location>
    <ligand>
        <name>Cu cation</name>
        <dbReference type="ChEBI" id="CHEBI:23378"/>
    </ligand>
</feature>
<feature type="binding site" evidence="2">
    <location>
        <position position="98"/>
    </location>
    <ligand>
        <name>Cu cation</name>
        <dbReference type="ChEBI" id="CHEBI:23378"/>
    </ligand>
</feature>
<feature type="binding site" evidence="2">
    <location>
        <position position="103"/>
    </location>
    <ligand>
        <name>Cu cation</name>
        <dbReference type="ChEBI" id="CHEBI:23378"/>
    </ligand>
</feature>
<feature type="lipid moiety-binding region" description="GPI-anchor amidated glycine" evidence="3">
    <location>
        <position position="153"/>
    </location>
</feature>
<feature type="glycosylation site" description="N-linked (GlcNAc...) asparagine" evidence="4">
    <location>
        <position position="87"/>
    </location>
</feature>
<feature type="glycosylation site" description="N-linked (GlcNAc...) asparagine" evidence="4">
    <location>
        <position position="142"/>
    </location>
</feature>
<feature type="disulfide bond" evidence="2">
    <location>
        <begin position="66"/>
        <end position="104"/>
    </location>
</feature>
<keyword id="KW-1003">Cell membrane</keyword>
<keyword id="KW-0186">Copper</keyword>
<keyword id="KW-1015">Disulfide bond</keyword>
<keyword id="KW-0249">Electron transport</keyword>
<keyword id="KW-0325">Glycoprotein</keyword>
<keyword id="KW-0336">GPI-anchor</keyword>
<keyword id="KW-0449">Lipoprotein</keyword>
<keyword id="KW-0472">Membrane</keyword>
<keyword id="KW-0479">Metal-binding</keyword>
<keyword id="KW-1185">Reference proteome</keyword>
<keyword id="KW-0964">Secreted</keyword>
<keyword id="KW-0732">Signal</keyword>
<keyword id="KW-0813">Transport</keyword>
<name>CUPR1_ARTBC</name>
<evidence type="ECO:0000250" key="1">
    <source>
        <dbReference type="UniProtKB" id="P04377"/>
    </source>
</evidence>
<evidence type="ECO:0000250" key="2">
    <source>
        <dbReference type="UniProtKB" id="P42849"/>
    </source>
</evidence>
<evidence type="ECO:0000255" key="3"/>
<evidence type="ECO:0000255" key="4">
    <source>
        <dbReference type="PROSITE-ProRule" id="PRU00498"/>
    </source>
</evidence>
<evidence type="ECO:0000256" key="5">
    <source>
        <dbReference type="SAM" id="MobiDB-lite"/>
    </source>
</evidence>
<evidence type="ECO:0000269" key="6">
    <source>
    </source>
</evidence>
<evidence type="ECO:0000305" key="7"/>
<comment type="function">
    <text evidence="1">Probable electron transfer copper protein that serves as a direct electron donor (By similarity).</text>
</comment>
<comment type="cofactor">
    <cofactor evidence="1">
        <name>Cu cation</name>
        <dbReference type="ChEBI" id="CHEBI:23378"/>
    </cofactor>
    <text evidence="1">Binds 1 copper ion per subunit.</text>
</comment>
<comment type="subcellular location">
    <subcellularLocation>
        <location evidence="3">Cell membrane</location>
        <topology evidence="3">Lipid-anchor</topology>
        <topology evidence="3">GPI-anchor</topology>
    </subcellularLocation>
    <subcellularLocation>
        <location evidence="6">Secreted</location>
    </subcellularLocation>
</comment>
<comment type="similarity">
    <text evidence="7">Belongs to the multicopper oxidase family.</text>
</comment>
<comment type="sequence caution" evidence="7">
    <conflict type="erroneous gene model prediction">
        <sequence resource="EMBL-CDS" id="EFE35688"/>
    </conflict>
    <text>The predicted gene ARB_05732 has been split into 2 genes: ARB_05732-1 and ARB_05732-2.</text>
</comment>
<protein>
    <recommendedName>
        <fullName evidence="7">Probable GPI-anchored cupredoxin ARB_05732-1</fullName>
    </recommendedName>
</protein>
<sequence>MVNMNILTTVALAGLAAAKTVEVVVAENGGLTFTPNQIKADVNDIVHFKLAKSGHDISSGPFDMPCKPSDNSLYSGKLNEGDEFSVNITNTDPIWLYCSVSKHCSKGMVAVINPPSSGNTIEAYKQAAAGAGNGQAPSRVNNGSSGSGTPTSGGAPAATSPNAASSLTFSGAAALVAMGGAWIGLL</sequence>
<gene>
    <name type="ORF">ARB_05732-1</name>
</gene>
<dbReference type="EMBL" id="ABSU01000003">
    <property type="protein sequence ID" value="EFE35688.1"/>
    <property type="status" value="ALT_SEQ"/>
    <property type="molecule type" value="Genomic_DNA"/>
</dbReference>
<dbReference type="SMR" id="P0DN32"/>
<dbReference type="OrthoDB" id="2331100at2759"/>
<dbReference type="Proteomes" id="UP000008866">
    <property type="component" value="Unassembled WGS sequence"/>
</dbReference>
<dbReference type="GO" id="GO:0005576">
    <property type="term" value="C:extracellular region"/>
    <property type="evidence" value="ECO:0007669"/>
    <property type="project" value="UniProtKB-SubCell"/>
</dbReference>
<dbReference type="GO" id="GO:0005886">
    <property type="term" value="C:plasma membrane"/>
    <property type="evidence" value="ECO:0007669"/>
    <property type="project" value="UniProtKB-SubCell"/>
</dbReference>
<dbReference type="GO" id="GO:0098552">
    <property type="term" value="C:side of membrane"/>
    <property type="evidence" value="ECO:0007669"/>
    <property type="project" value="UniProtKB-KW"/>
</dbReference>
<dbReference type="GO" id="GO:0046872">
    <property type="term" value="F:metal ion binding"/>
    <property type="evidence" value="ECO:0007669"/>
    <property type="project" value="UniProtKB-KW"/>
</dbReference>
<dbReference type="CDD" id="cd00920">
    <property type="entry name" value="Cupredoxin"/>
    <property type="match status" value="1"/>
</dbReference>
<dbReference type="Gene3D" id="2.60.40.420">
    <property type="entry name" value="Cupredoxins - blue copper proteins"/>
    <property type="match status" value="1"/>
</dbReference>
<dbReference type="InterPro" id="IPR008972">
    <property type="entry name" value="Cupredoxin"/>
</dbReference>
<dbReference type="InterPro" id="IPR052953">
    <property type="entry name" value="Ser-rich/MCO-related"/>
</dbReference>
<dbReference type="PANTHER" id="PTHR34883:SF17">
    <property type="entry name" value="CUPREDOXIN"/>
    <property type="match status" value="1"/>
</dbReference>
<dbReference type="PANTHER" id="PTHR34883">
    <property type="entry name" value="SERINE-RICH PROTEIN, PUTATIVE-RELATED-RELATED"/>
    <property type="match status" value="1"/>
</dbReference>
<dbReference type="SUPFAM" id="SSF49503">
    <property type="entry name" value="Cupredoxins"/>
    <property type="match status" value="1"/>
</dbReference>
<accession>P0DN32</accession>
<accession>D4ANC7</accession>
<proteinExistence type="evidence at protein level"/>